<sequence length="442" mass="50656">MESLSSLYRDHIATLQQRTREILQRQQLEGLLIHAGEPISRFLDDHDYPFKVNPQFKAWFPVTRVPHCWLWVDGVNKPKLWYYLSIDYWYLVEPLPDSFWTPYVDIVPFADPDEIAALLPPRDNVAYLGSSPHRASLLGMERDFINPQPVLDYLHYHRAYKTDYELACMREAQKSAVNGHRAAKEAFLSGMCEFDINIAYLSACGHRDTDVPYDNIIALNEHAAVLHYTRLDQHTPEHVMSFLIDAGTEYNGYAADLTRTYAAQKDSDFAALIAAMNSEQQALIATIETGVNYIDYHLQMHGRIAKLLKQFDILSGLSEDAMVTEGLTLPFLPHGLGHPLGLQVHDVAGFMQDDRGTSLAPQSRYTHLRCTRVLQPRMVLTIEPGLYFIESLLAPWRANTFGRHFNWSRIESFKPYGGIRIEDNIVIHDNHIENMTRALKLE</sequence>
<name>PEPQ_SODGM</name>
<organism>
    <name type="scientific">Sodalis glossinidius (strain morsitans)</name>
    <dbReference type="NCBI Taxonomy" id="343509"/>
    <lineage>
        <taxon>Bacteria</taxon>
        <taxon>Pseudomonadati</taxon>
        <taxon>Pseudomonadota</taxon>
        <taxon>Gammaproteobacteria</taxon>
        <taxon>Enterobacterales</taxon>
        <taxon>Bruguierivoracaceae</taxon>
        <taxon>Sodalis</taxon>
    </lineage>
</organism>
<feature type="chain" id="PRO_0000303871" description="Xaa-Pro dipeptidase">
    <location>
        <begin position="1"/>
        <end position="442"/>
    </location>
</feature>
<feature type="binding site" evidence="1">
    <location>
        <position position="245"/>
    </location>
    <ligand>
        <name>Mn(2+)</name>
        <dbReference type="ChEBI" id="CHEBI:29035"/>
        <label>2</label>
    </ligand>
</feature>
<feature type="binding site" evidence="1">
    <location>
        <position position="256"/>
    </location>
    <ligand>
        <name>Mn(2+)</name>
        <dbReference type="ChEBI" id="CHEBI:29035"/>
        <label>1</label>
    </ligand>
</feature>
<feature type="binding site" evidence="1">
    <location>
        <position position="256"/>
    </location>
    <ligand>
        <name>Mn(2+)</name>
        <dbReference type="ChEBI" id="CHEBI:29035"/>
        <label>2</label>
    </ligand>
</feature>
<feature type="binding site" evidence="1">
    <location>
        <position position="338"/>
    </location>
    <ligand>
        <name>Mn(2+)</name>
        <dbReference type="ChEBI" id="CHEBI:29035"/>
        <label>1</label>
    </ligand>
</feature>
<feature type="binding site" evidence="1">
    <location>
        <position position="383"/>
    </location>
    <ligand>
        <name>Mn(2+)</name>
        <dbReference type="ChEBI" id="CHEBI:29035"/>
        <label>1</label>
    </ligand>
</feature>
<feature type="binding site" evidence="1">
    <location>
        <position position="422"/>
    </location>
    <ligand>
        <name>Mn(2+)</name>
        <dbReference type="ChEBI" id="CHEBI:29035"/>
        <label>1</label>
    </ligand>
</feature>
<feature type="binding site" evidence="1">
    <location>
        <position position="422"/>
    </location>
    <ligand>
        <name>Mn(2+)</name>
        <dbReference type="ChEBI" id="CHEBI:29035"/>
        <label>2</label>
    </ligand>
</feature>
<comment type="function">
    <text evidence="1">Splits dipeptides with a prolyl residue in the C-terminal position.</text>
</comment>
<comment type="catalytic activity">
    <reaction evidence="1">
        <text>Xaa-L-Pro dipeptide + H2O = an L-alpha-amino acid + L-proline</text>
        <dbReference type="Rhea" id="RHEA:76407"/>
        <dbReference type="ChEBI" id="CHEBI:15377"/>
        <dbReference type="ChEBI" id="CHEBI:59869"/>
        <dbReference type="ChEBI" id="CHEBI:60039"/>
        <dbReference type="ChEBI" id="CHEBI:195196"/>
        <dbReference type="EC" id="3.4.13.9"/>
    </reaction>
</comment>
<comment type="cofactor">
    <cofactor evidence="1">
        <name>Mn(2+)</name>
        <dbReference type="ChEBI" id="CHEBI:29035"/>
    </cofactor>
    <text evidence="1">Binds 2 manganese ions per subunit.</text>
</comment>
<comment type="similarity">
    <text evidence="1">Belongs to the peptidase M24B family. Bacterial-type prolidase subfamily.</text>
</comment>
<gene>
    <name evidence="1" type="primary">pepQ</name>
    <name type="ordered locus">SG0118</name>
</gene>
<dbReference type="EC" id="3.4.13.9" evidence="1"/>
<dbReference type="EMBL" id="AP008232">
    <property type="protein sequence ID" value="BAE73393.1"/>
    <property type="molecule type" value="Genomic_DNA"/>
</dbReference>
<dbReference type="RefSeq" id="WP_011409983.1">
    <property type="nucleotide sequence ID" value="NC_007712.1"/>
</dbReference>
<dbReference type="SMR" id="Q2NWT2"/>
<dbReference type="STRING" id="343509.SG0118"/>
<dbReference type="MEROPS" id="M24.003"/>
<dbReference type="KEGG" id="sgl:SG0118"/>
<dbReference type="eggNOG" id="COG0006">
    <property type="taxonomic scope" value="Bacteria"/>
</dbReference>
<dbReference type="HOGENOM" id="CLU_050675_0_0_6"/>
<dbReference type="OrthoDB" id="9806388at2"/>
<dbReference type="BioCyc" id="SGLO343509:SGP1_RS00995-MONOMER"/>
<dbReference type="Proteomes" id="UP000001932">
    <property type="component" value="Chromosome"/>
</dbReference>
<dbReference type="GO" id="GO:0005829">
    <property type="term" value="C:cytosol"/>
    <property type="evidence" value="ECO:0007669"/>
    <property type="project" value="TreeGrafter"/>
</dbReference>
<dbReference type="GO" id="GO:0004177">
    <property type="term" value="F:aminopeptidase activity"/>
    <property type="evidence" value="ECO:0007669"/>
    <property type="project" value="TreeGrafter"/>
</dbReference>
<dbReference type="GO" id="GO:0046872">
    <property type="term" value="F:metal ion binding"/>
    <property type="evidence" value="ECO:0007669"/>
    <property type="project" value="UniProtKB-KW"/>
</dbReference>
<dbReference type="GO" id="GO:0008235">
    <property type="term" value="F:metalloexopeptidase activity"/>
    <property type="evidence" value="ECO:0007669"/>
    <property type="project" value="UniProtKB-UniRule"/>
</dbReference>
<dbReference type="GO" id="GO:0016795">
    <property type="term" value="F:phosphoric triester hydrolase activity"/>
    <property type="evidence" value="ECO:0007669"/>
    <property type="project" value="InterPro"/>
</dbReference>
<dbReference type="GO" id="GO:0102009">
    <property type="term" value="F:proline dipeptidase activity"/>
    <property type="evidence" value="ECO:0007669"/>
    <property type="project" value="UniProtKB-EC"/>
</dbReference>
<dbReference type="GO" id="GO:0006508">
    <property type="term" value="P:proteolysis"/>
    <property type="evidence" value="ECO:0007669"/>
    <property type="project" value="UniProtKB-KW"/>
</dbReference>
<dbReference type="Gene3D" id="3.90.230.10">
    <property type="entry name" value="Creatinase/methionine aminopeptidase superfamily"/>
    <property type="match status" value="1"/>
</dbReference>
<dbReference type="Gene3D" id="3.40.350.10">
    <property type="entry name" value="Creatinase/prolidase N-terminal domain"/>
    <property type="match status" value="1"/>
</dbReference>
<dbReference type="HAMAP" id="MF_01279">
    <property type="entry name" value="X_Pro_dipeptid"/>
    <property type="match status" value="1"/>
</dbReference>
<dbReference type="InterPro" id="IPR029149">
    <property type="entry name" value="Creatin/AminoP/Spt16_N"/>
</dbReference>
<dbReference type="InterPro" id="IPR036005">
    <property type="entry name" value="Creatinase/aminopeptidase-like"/>
</dbReference>
<dbReference type="InterPro" id="IPR048819">
    <property type="entry name" value="PepQ_N"/>
</dbReference>
<dbReference type="InterPro" id="IPR000994">
    <property type="entry name" value="Pept_M24"/>
</dbReference>
<dbReference type="InterPro" id="IPR001131">
    <property type="entry name" value="Peptidase_M24B_aminopep-P_CS"/>
</dbReference>
<dbReference type="InterPro" id="IPR052433">
    <property type="entry name" value="X-Pro_dipept-like"/>
</dbReference>
<dbReference type="InterPro" id="IPR022846">
    <property type="entry name" value="X_Pro_dipept"/>
</dbReference>
<dbReference type="NCBIfam" id="NF010133">
    <property type="entry name" value="PRK13607.1"/>
    <property type="match status" value="1"/>
</dbReference>
<dbReference type="PANTHER" id="PTHR43226">
    <property type="entry name" value="XAA-PRO AMINOPEPTIDASE 3"/>
    <property type="match status" value="1"/>
</dbReference>
<dbReference type="PANTHER" id="PTHR43226:SF8">
    <property type="entry name" value="XAA-PRO DIPEPTIDASE"/>
    <property type="match status" value="1"/>
</dbReference>
<dbReference type="Pfam" id="PF21216">
    <property type="entry name" value="PepQ_N"/>
    <property type="match status" value="1"/>
</dbReference>
<dbReference type="Pfam" id="PF00557">
    <property type="entry name" value="Peptidase_M24"/>
    <property type="match status" value="1"/>
</dbReference>
<dbReference type="SUPFAM" id="SSF55920">
    <property type="entry name" value="Creatinase/aminopeptidase"/>
    <property type="match status" value="1"/>
</dbReference>
<dbReference type="PROSITE" id="PS00491">
    <property type="entry name" value="PROLINE_PEPTIDASE"/>
    <property type="match status" value="1"/>
</dbReference>
<accession>Q2NWT2</accession>
<keyword id="KW-0224">Dipeptidase</keyword>
<keyword id="KW-0378">Hydrolase</keyword>
<keyword id="KW-0464">Manganese</keyword>
<keyword id="KW-0479">Metal-binding</keyword>
<keyword id="KW-0482">Metalloprotease</keyword>
<keyword id="KW-0645">Protease</keyword>
<protein>
    <recommendedName>
        <fullName evidence="1">Xaa-Pro dipeptidase</fullName>
        <shortName evidence="1">X-Pro dipeptidase</shortName>
        <ecNumber evidence="1">3.4.13.9</ecNumber>
    </recommendedName>
    <alternativeName>
        <fullName evidence="1">Imidodipeptidase</fullName>
    </alternativeName>
    <alternativeName>
        <fullName evidence="1">Proline dipeptidase</fullName>
        <shortName evidence="1">Prolidase</shortName>
    </alternativeName>
</protein>
<reference key="1">
    <citation type="journal article" date="2006" name="Genome Res.">
        <title>Massive genome erosion and functional adaptations provide insights into the symbiotic lifestyle of Sodalis glossinidius in the tsetse host.</title>
        <authorList>
            <person name="Toh H."/>
            <person name="Weiss B.L."/>
            <person name="Perkin S.A.H."/>
            <person name="Yamashita A."/>
            <person name="Oshima K."/>
            <person name="Hattori M."/>
            <person name="Aksoy S."/>
        </authorList>
    </citation>
    <scope>NUCLEOTIDE SEQUENCE [LARGE SCALE GENOMIC DNA]</scope>
    <source>
        <strain>morsitans</strain>
    </source>
</reference>
<proteinExistence type="inferred from homology"/>
<evidence type="ECO:0000255" key="1">
    <source>
        <dbReference type="HAMAP-Rule" id="MF_01279"/>
    </source>
</evidence>